<comment type="function">
    <text evidence="1">Catalyzes the reduction of 1-pyrroline-5-carboxylate (PCA) to L-proline.</text>
</comment>
<comment type="catalytic activity">
    <reaction evidence="1">
        <text>L-proline + NADP(+) = (S)-1-pyrroline-5-carboxylate + NADPH + 2 H(+)</text>
        <dbReference type="Rhea" id="RHEA:14109"/>
        <dbReference type="ChEBI" id="CHEBI:15378"/>
        <dbReference type="ChEBI" id="CHEBI:17388"/>
        <dbReference type="ChEBI" id="CHEBI:57783"/>
        <dbReference type="ChEBI" id="CHEBI:58349"/>
        <dbReference type="ChEBI" id="CHEBI:60039"/>
        <dbReference type="EC" id="1.5.1.2"/>
    </reaction>
</comment>
<comment type="catalytic activity">
    <reaction evidence="1">
        <text>L-proline + NAD(+) = (S)-1-pyrroline-5-carboxylate + NADH + 2 H(+)</text>
        <dbReference type="Rhea" id="RHEA:14105"/>
        <dbReference type="ChEBI" id="CHEBI:15378"/>
        <dbReference type="ChEBI" id="CHEBI:17388"/>
        <dbReference type="ChEBI" id="CHEBI:57540"/>
        <dbReference type="ChEBI" id="CHEBI:57945"/>
        <dbReference type="ChEBI" id="CHEBI:60039"/>
        <dbReference type="EC" id="1.5.1.2"/>
    </reaction>
</comment>
<comment type="pathway">
    <text evidence="1">Amino-acid biosynthesis; L-proline biosynthesis; L-proline from L-glutamate 5-semialdehyde: step 1/1.</text>
</comment>
<comment type="subcellular location">
    <subcellularLocation>
        <location evidence="1">Cytoplasm</location>
    </subcellularLocation>
</comment>
<comment type="similarity">
    <text evidence="1">Belongs to the pyrroline-5-carboxylate reductase family.</text>
</comment>
<name>P5CR_SYNY3</name>
<protein>
    <recommendedName>
        <fullName evidence="1">Pyrroline-5-carboxylate reductase</fullName>
        <shortName evidence="1">P5C reductase</shortName>
        <shortName evidence="1">P5CR</shortName>
        <ecNumber evidence="1">1.5.1.2</ecNumber>
    </recommendedName>
    <alternativeName>
        <fullName evidence="1">PCA reductase</fullName>
    </alternativeName>
</protein>
<dbReference type="EC" id="1.5.1.2" evidence="1"/>
<dbReference type="EMBL" id="BA000022">
    <property type="protein sequence ID" value="BAA18679.1"/>
    <property type="molecule type" value="Genomic_DNA"/>
</dbReference>
<dbReference type="PIR" id="S76767">
    <property type="entry name" value="S76767"/>
</dbReference>
<dbReference type="SMR" id="P74572"/>
<dbReference type="FunCoup" id="P74572">
    <property type="interactions" value="425"/>
</dbReference>
<dbReference type="IntAct" id="P74572">
    <property type="interactions" value="1"/>
</dbReference>
<dbReference type="STRING" id="1148.gene:10500450"/>
<dbReference type="PaxDb" id="1148-1653768"/>
<dbReference type="EnsemblBacteria" id="BAA18679">
    <property type="protein sequence ID" value="BAA18679"/>
    <property type="gene ID" value="BAA18679"/>
</dbReference>
<dbReference type="KEGG" id="syn:slr0661"/>
<dbReference type="eggNOG" id="COG0345">
    <property type="taxonomic scope" value="Bacteria"/>
</dbReference>
<dbReference type="InParanoid" id="P74572"/>
<dbReference type="PhylomeDB" id="P74572"/>
<dbReference type="UniPathway" id="UPA00098">
    <property type="reaction ID" value="UER00361"/>
</dbReference>
<dbReference type="Proteomes" id="UP000001425">
    <property type="component" value="Chromosome"/>
</dbReference>
<dbReference type="GO" id="GO:0005737">
    <property type="term" value="C:cytoplasm"/>
    <property type="evidence" value="ECO:0007669"/>
    <property type="project" value="UniProtKB-SubCell"/>
</dbReference>
<dbReference type="GO" id="GO:0004735">
    <property type="term" value="F:pyrroline-5-carboxylate reductase activity"/>
    <property type="evidence" value="ECO:0000318"/>
    <property type="project" value="GO_Central"/>
</dbReference>
<dbReference type="GO" id="GO:0055129">
    <property type="term" value="P:L-proline biosynthetic process"/>
    <property type="evidence" value="ECO:0000318"/>
    <property type="project" value="GO_Central"/>
</dbReference>
<dbReference type="FunFam" id="1.10.3730.10:FF:000001">
    <property type="entry name" value="Pyrroline-5-carboxylate reductase"/>
    <property type="match status" value="1"/>
</dbReference>
<dbReference type="FunFam" id="3.40.50.720:FF:000190">
    <property type="entry name" value="Pyrroline-5-carboxylate reductase"/>
    <property type="match status" value="1"/>
</dbReference>
<dbReference type="Gene3D" id="3.40.50.720">
    <property type="entry name" value="NAD(P)-binding Rossmann-like Domain"/>
    <property type="match status" value="1"/>
</dbReference>
<dbReference type="Gene3D" id="1.10.3730.10">
    <property type="entry name" value="ProC C-terminal domain-like"/>
    <property type="match status" value="1"/>
</dbReference>
<dbReference type="HAMAP" id="MF_01925">
    <property type="entry name" value="P5C_reductase"/>
    <property type="match status" value="1"/>
</dbReference>
<dbReference type="InterPro" id="IPR008927">
    <property type="entry name" value="6-PGluconate_DH-like_C_sf"/>
</dbReference>
<dbReference type="InterPro" id="IPR036291">
    <property type="entry name" value="NAD(P)-bd_dom_sf"/>
</dbReference>
<dbReference type="InterPro" id="IPR028939">
    <property type="entry name" value="P5C_Rdtase_cat_N"/>
</dbReference>
<dbReference type="InterPro" id="IPR053790">
    <property type="entry name" value="P5CR-like_CS"/>
</dbReference>
<dbReference type="InterPro" id="IPR029036">
    <property type="entry name" value="P5CR_dimer"/>
</dbReference>
<dbReference type="InterPro" id="IPR000304">
    <property type="entry name" value="Pyrroline-COOH_reductase"/>
</dbReference>
<dbReference type="NCBIfam" id="TIGR00112">
    <property type="entry name" value="proC"/>
    <property type="match status" value="1"/>
</dbReference>
<dbReference type="PANTHER" id="PTHR11645">
    <property type="entry name" value="PYRROLINE-5-CARBOXYLATE REDUCTASE"/>
    <property type="match status" value="1"/>
</dbReference>
<dbReference type="PANTHER" id="PTHR11645:SF0">
    <property type="entry name" value="PYRROLINE-5-CARBOXYLATE REDUCTASE 3"/>
    <property type="match status" value="1"/>
</dbReference>
<dbReference type="Pfam" id="PF03807">
    <property type="entry name" value="F420_oxidored"/>
    <property type="match status" value="1"/>
</dbReference>
<dbReference type="Pfam" id="PF14748">
    <property type="entry name" value="P5CR_dimer"/>
    <property type="match status" value="1"/>
</dbReference>
<dbReference type="PIRSF" id="PIRSF000193">
    <property type="entry name" value="Pyrrol-5-carb_rd"/>
    <property type="match status" value="1"/>
</dbReference>
<dbReference type="SUPFAM" id="SSF48179">
    <property type="entry name" value="6-phosphogluconate dehydrogenase C-terminal domain-like"/>
    <property type="match status" value="1"/>
</dbReference>
<dbReference type="SUPFAM" id="SSF51735">
    <property type="entry name" value="NAD(P)-binding Rossmann-fold domains"/>
    <property type="match status" value="1"/>
</dbReference>
<dbReference type="PROSITE" id="PS00521">
    <property type="entry name" value="P5CR"/>
    <property type="match status" value="1"/>
</dbReference>
<sequence length="267" mass="27883">MSIQLGIIGGGVMAEAILARLIAEKTYAPEEIIVGEPHGARRDYLQKTYQVRVSPDNQEAANVSEVLLLAVKPQVLDRVLASLAGGANRPLVISILAGVSLQRIQKGFPDHAIIRAMPNTPATVGAGMTAIAANKMVEPDQLAKAKAIFSAVGNVVEVPENLMDAVTGVSGSGPAYVALMIEALADGGVLAGLPRAIAQKLALQTVLGTAELIKETEEHPAQIKDKVTSPGGTTIAGVAVLEKMGFRSAIIEAVRAAYRRSQELGKK</sequence>
<accession>P74572</accession>
<feature type="chain" id="PRO_0000187308" description="Pyrroline-5-carboxylate reductase">
    <location>
        <begin position="1"/>
        <end position="267"/>
    </location>
</feature>
<proteinExistence type="inferred from homology"/>
<reference key="1">
    <citation type="journal article" date="1996" name="DNA Res.">
        <title>Sequence analysis of the genome of the unicellular cyanobacterium Synechocystis sp. strain PCC6803. II. Sequence determination of the entire genome and assignment of potential protein-coding regions.</title>
        <authorList>
            <person name="Kaneko T."/>
            <person name="Sato S."/>
            <person name="Kotani H."/>
            <person name="Tanaka A."/>
            <person name="Asamizu E."/>
            <person name="Nakamura Y."/>
            <person name="Miyajima N."/>
            <person name="Hirosawa M."/>
            <person name="Sugiura M."/>
            <person name="Sasamoto S."/>
            <person name="Kimura T."/>
            <person name="Hosouchi T."/>
            <person name="Matsuno A."/>
            <person name="Muraki A."/>
            <person name="Nakazaki N."/>
            <person name="Naruo K."/>
            <person name="Okumura S."/>
            <person name="Shimpo S."/>
            <person name="Takeuchi C."/>
            <person name="Wada T."/>
            <person name="Watanabe A."/>
            <person name="Yamada M."/>
            <person name="Yasuda M."/>
            <person name="Tabata S."/>
        </authorList>
    </citation>
    <scope>NUCLEOTIDE SEQUENCE [LARGE SCALE GENOMIC DNA]</scope>
    <source>
        <strain>ATCC 27184 / PCC 6803 / Kazusa</strain>
    </source>
</reference>
<gene>
    <name evidence="1" type="primary">proC</name>
    <name type="ordered locus">slr0661</name>
</gene>
<organism>
    <name type="scientific">Synechocystis sp. (strain ATCC 27184 / PCC 6803 / Kazusa)</name>
    <dbReference type="NCBI Taxonomy" id="1111708"/>
    <lineage>
        <taxon>Bacteria</taxon>
        <taxon>Bacillati</taxon>
        <taxon>Cyanobacteriota</taxon>
        <taxon>Cyanophyceae</taxon>
        <taxon>Synechococcales</taxon>
        <taxon>Merismopediaceae</taxon>
        <taxon>Synechocystis</taxon>
    </lineage>
</organism>
<evidence type="ECO:0000255" key="1">
    <source>
        <dbReference type="HAMAP-Rule" id="MF_01925"/>
    </source>
</evidence>
<keyword id="KW-0028">Amino-acid biosynthesis</keyword>
<keyword id="KW-0963">Cytoplasm</keyword>
<keyword id="KW-0521">NADP</keyword>
<keyword id="KW-0560">Oxidoreductase</keyword>
<keyword id="KW-0641">Proline biosynthesis</keyword>
<keyword id="KW-1185">Reference proteome</keyword>